<accession>Q5MZP5</accession>
<reference key="1">
    <citation type="journal article" date="2007" name="Photosyn. Res.">
        <title>Complete nucleotide sequence of the freshwater unicellular cyanobacterium Synechococcus elongatus PCC 6301 chromosome: gene content and organization.</title>
        <authorList>
            <person name="Sugita C."/>
            <person name="Ogata K."/>
            <person name="Shikata M."/>
            <person name="Jikuya H."/>
            <person name="Takano J."/>
            <person name="Furumichi M."/>
            <person name="Kanehisa M."/>
            <person name="Omata T."/>
            <person name="Sugiura M."/>
            <person name="Sugita M."/>
        </authorList>
    </citation>
    <scope>NUCLEOTIDE SEQUENCE [LARGE SCALE GENOMIC DNA]</scope>
    <source>
        <strain>ATCC 27144 / PCC 6301 / SAUG 1402/1</strain>
    </source>
</reference>
<organism>
    <name type="scientific">Synechococcus sp. (strain ATCC 27144 / PCC 6301 / SAUG 1402/1)</name>
    <name type="common">Anacystis nidulans</name>
    <dbReference type="NCBI Taxonomy" id="269084"/>
    <lineage>
        <taxon>Bacteria</taxon>
        <taxon>Bacillati</taxon>
        <taxon>Cyanobacteriota</taxon>
        <taxon>Cyanophyceae</taxon>
        <taxon>Synechococcales</taxon>
        <taxon>Synechococcaceae</taxon>
        <taxon>Synechococcus</taxon>
    </lineage>
</organism>
<keyword id="KW-0067">ATP-binding</keyword>
<keyword id="KW-0173">Coenzyme A biosynthesis</keyword>
<keyword id="KW-0963">Cytoplasm</keyword>
<keyword id="KW-0418">Kinase</keyword>
<keyword id="KW-0479">Metal-binding</keyword>
<keyword id="KW-0547">Nucleotide-binding</keyword>
<keyword id="KW-0630">Potassium</keyword>
<keyword id="KW-0808">Transferase</keyword>
<dbReference type="EC" id="2.7.1.33" evidence="1"/>
<dbReference type="EMBL" id="AP008231">
    <property type="protein sequence ID" value="BAD80475.1"/>
    <property type="molecule type" value="Genomic_DNA"/>
</dbReference>
<dbReference type="RefSeq" id="WP_011244595.1">
    <property type="nucleotide sequence ID" value="NC_006576.1"/>
</dbReference>
<dbReference type="SMR" id="Q5MZP5"/>
<dbReference type="KEGG" id="syc:syc2285_d"/>
<dbReference type="eggNOG" id="COG1521">
    <property type="taxonomic scope" value="Bacteria"/>
</dbReference>
<dbReference type="UniPathway" id="UPA00241">
    <property type="reaction ID" value="UER00352"/>
</dbReference>
<dbReference type="Proteomes" id="UP000001175">
    <property type="component" value="Chromosome"/>
</dbReference>
<dbReference type="GO" id="GO:0005737">
    <property type="term" value="C:cytoplasm"/>
    <property type="evidence" value="ECO:0007669"/>
    <property type="project" value="UniProtKB-SubCell"/>
</dbReference>
<dbReference type="GO" id="GO:0005524">
    <property type="term" value="F:ATP binding"/>
    <property type="evidence" value="ECO:0007669"/>
    <property type="project" value="UniProtKB-UniRule"/>
</dbReference>
<dbReference type="GO" id="GO:0046872">
    <property type="term" value="F:metal ion binding"/>
    <property type="evidence" value="ECO:0007669"/>
    <property type="project" value="UniProtKB-KW"/>
</dbReference>
<dbReference type="GO" id="GO:0004594">
    <property type="term" value="F:pantothenate kinase activity"/>
    <property type="evidence" value="ECO:0007669"/>
    <property type="project" value="UniProtKB-UniRule"/>
</dbReference>
<dbReference type="GO" id="GO:0015937">
    <property type="term" value="P:coenzyme A biosynthetic process"/>
    <property type="evidence" value="ECO:0007669"/>
    <property type="project" value="UniProtKB-UniRule"/>
</dbReference>
<dbReference type="CDD" id="cd24015">
    <property type="entry name" value="ASKHA_NBD_PanK-III"/>
    <property type="match status" value="1"/>
</dbReference>
<dbReference type="Gene3D" id="3.30.420.40">
    <property type="match status" value="1"/>
</dbReference>
<dbReference type="HAMAP" id="MF_01274">
    <property type="entry name" value="Pantothen_kinase_3"/>
    <property type="match status" value="1"/>
</dbReference>
<dbReference type="InterPro" id="IPR043129">
    <property type="entry name" value="ATPase_NBD"/>
</dbReference>
<dbReference type="InterPro" id="IPR004619">
    <property type="entry name" value="Type_III_PanK"/>
</dbReference>
<dbReference type="NCBIfam" id="TIGR00671">
    <property type="entry name" value="baf"/>
    <property type="match status" value="1"/>
</dbReference>
<dbReference type="NCBIfam" id="NF009871">
    <property type="entry name" value="PRK13331.1"/>
    <property type="match status" value="1"/>
</dbReference>
<dbReference type="PANTHER" id="PTHR34265">
    <property type="entry name" value="TYPE III PANTOTHENATE KINASE"/>
    <property type="match status" value="1"/>
</dbReference>
<dbReference type="PANTHER" id="PTHR34265:SF1">
    <property type="entry name" value="TYPE III PANTOTHENATE KINASE"/>
    <property type="match status" value="1"/>
</dbReference>
<dbReference type="Pfam" id="PF03309">
    <property type="entry name" value="Pan_kinase"/>
    <property type="match status" value="1"/>
</dbReference>
<dbReference type="SUPFAM" id="SSF53067">
    <property type="entry name" value="Actin-like ATPase domain"/>
    <property type="match status" value="2"/>
</dbReference>
<gene>
    <name evidence="1" type="primary">coaX</name>
    <name type="ordered locus">syc2285_d</name>
</gene>
<feature type="chain" id="PRO_0000270901" description="Type III pantothenate kinase">
    <location>
        <begin position="1"/>
        <end position="247"/>
    </location>
</feature>
<feature type="active site" description="Proton acceptor" evidence="1">
    <location>
        <position position="97"/>
    </location>
</feature>
<feature type="binding site" evidence="1">
    <location>
        <begin position="7"/>
        <end position="14"/>
    </location>
    <ligand>
        <name>ATP</name>
        <dbReference type="ChEBI" id="CHEBI:30616"/>
    </ligand>
</feature>
<feature type="binding site" evidence="1">
    <location>
        <position position="91"/>
    </location>
    <ligand>
        <name>substrate</name>
    </ligand>
</feature>
<feature type="binding site" evidence="1">
    <location>
        <begin position="95"/>
        <end position="98"/>
    </location>
    <ligand>
        <name>substrate</name>
    </ligand>
</feature>
<feature type="binding site" evidence="1">
    <location>
        <position position="117"/>
    </location>
    <ligand>
        <name>K(+)</name>
        <dbReference type="ChEBI" id="CHEBI:29103"/>
    </ligand>
</feature>
<feature type="binding site" evidence="1">
    <location>
        <position position="120"/>
    </location>
    <ligand>
        <name>ATP</name>
        <dbReference type="ChEBI" id="CHEBI:30616"/>
    </ligand>
</feature>
<protein>
    <recommendedName>
        <fullName evidence="1">Type III pantothenate kinase</fullName>
        <ecNumber evidence="1">2.7.1.33</ecNumber>
    </recommendedName>
    <alternativeName>
        <fullName evidence="1">PanK-III</fullName>
    </alternativeName>
    <alternativeName>
        <fullName evidence="1">Pantothenic acid kinase</fullName>
    </alternativeName>
</protein>
<comment type="function">
    <text evidence="1">Catalyzes the phosphorylation of pantothenate (Pan), the first step in CoA biosynthesis.</text>
</comment>
<comment type="catalytic activity">
    <reaction evidence="1">
        <text>(R)-pantothenate + ATP = (R)-4'-phosphopantothenate + ADP + H(+)</text>
        <dbReference type="Rhea" id="RHEA:16373"/>
        <dbReference type="ChEBI" id="CHEBI:10986"/>
        <dbReference type="ChEBI" id="CHEBI:15378"/>
        <dbReference type="ChEBI" id="CHEBI:29032"/>
        <dbReference type="ChEBI" id="CHEBI:30616"/>
        <dbReference type="ChEBI" id="CHEBI:456216"/>
        <dbReference type="EC" id="2.7.1.33"/>
    </reaction>
</comment>
<comment type="cofactor">
    <cofactor evidence="1">
        <name>NH4(+)</name>
        <dbReference type="ChEBI" id="CHEBI:28938"/>
    </cofactor>
    <cofactor evidence="1">
        <name>K(+)</name>
        <dbReference type="ChEBI" id="CHEBI:29103"/>
    </cofactor>
    <text evidence="1">A monovalent cation. Ammonium or potassium.</text>
</comment>
<comment type="pathway">
    <text evidence="1">Cofactor biosynthesis; coenzyme A biosynthesis; CoA from (R)-pantothenate: step 1/5.</text>
</comment>
<comment type="subunit">
    <text evidence="1">Homodimer.</text>
</comment>
<comment type="subcellular location">
    <subcellularLocation>
        <location evidence="1">Cytoplasm</location>
    </subcellularLocation>
</comment>
<comment type="similarity">
    <text evidence="1">Belongs to the type III pantothenate kinase family.</text>
</comment>
<name>COAX_SYNP6</name>
<sequence length="247" mass="26804">MSRLVLAIGNSRWHWGIFSRDQAPQFWDAIAPHQPFSRSDLATFLQAQDPAIVADTPIAIASVVPQQLALLPEDWPQRRLQLRDVPLTNCYPQLGLDRAIALYEAGCQAGWPVLMIDCGTAITINAGDAEGQFAGGAILPGVTLQLRSLAQGTAALPSVEISAEGDRWGMDNQSAIASGVIYGIAGALRGFIEDWRSHHPQRPIYFTGGDGELLAKLLTDLPDIRVEPHLLLHGIDRLAQAMMTDPD</sequence>
<proteinExistence type="inferred from homology"/>
<evidence type="ECO:0000255" key="1">
    <source>
        <dbReference type="HAMAP-Rule" id="MF_01274"/>
    </source>
</evidence>